<reference key="1">
    <citation type="journal article" date="2005" name="Nucleic Acids Res.">
        <title>The genome sequence of Salmonella enterica serovar Choleraesuis, a highly invasive and resistant zoonotic pathogen.</title>
        <authorList>
            <person name="Chiu C.-H."/>
            <person name="Tang P."/>
            <person name="Chu C."/>
            <person name="Hu S."/>
            <person name="Bao Q."/>
            <person name="Yu J."/>
            <person name="Chou Y.-Y."/>
            <person name="Wang H.-S."/>
            <person name="Lee Y.-S."/>
        </authorList>
    </citation>
    <scope>NUCLEOTIDE SEQUENCE [LARGE SCALE GENOMIC DNA]</scope>
    <source>
        <strain>SC-B67</strain>
    </source>
</reference>
<name>PHNX_SALCH</name>
<evidence type="ECO:0000255" key="1">
    <source>
        <dbReference type="HAMAP-Rule" id="MF_01375"/>
    </source>
</evidence>
<comment type="function">
    <text evidence="1">Involved in phosphonate degradation.</text>
</comment>
<comment type="catalytic activity">
    <reaction evidence="1">
        <text>phosphonoacetaldehyde + H2O = acetaldehyde + phosphate + H(+)</text>
        <dbReference type="Rhea" id="RHEA:18905"/>
        <dbReference type="ChEBI" id="CHEBI:15343"/>
        <dbReference type="ChEBI" id="CHEBI:15377"/>
        <dbReference type="ChEBI" id="CHEBI:15378"/>
        <dbReference type="ChEBI" id="CHEBI:43474"/>
        <dbReference type="ChEBI" id="CHEBI:58383"/>
        <dbReference type="EC" id="3.11.1.1"/>
    </reaction>
</comment>
<comment type="cofactor">
    <cofactor evidence="1">
        <name>Mg(2+)</name>
        <dbReference type="ChEBI" id="CHEBI:18420"/>
    </cofactor>
    <text evidence="1">Binds 1 Mg(2+) ion per subunit.</text>
</comment>
<comment type="subunit">
    <text evidence="1">Homodimer.</text>
</comment>
<comment type="similarity">
    <text evidence="1">Belongs to the HAD-like hydrolase superfamily. PhnX family.</text>
</comment>
<keyword id="KW-0378">Hydrolase</keyword>
<keyword id="KW-0460">Magnesium</keyword>
<keyword id="KW-0479">Metal-binding</keyword>
<keyword id="KW-0704">Schiff base</keyword>
<proteinExistence type="inferred from homology"/>
<gene>
    <name evidence="1" type="primary">phnX</name>
    <name type="ordered locus">SCH_0473</name>
</gene>
<dbReference type="EC" id="3.11.1.1" evidence="1"/>
<dbReference type="EMBL" id="AE017220">
    <property type="protein sequence ID" value="AAX64379.1"/>
    <property type="molecule type" value="Genomic_DNA"/>
</dbReference>
<dbReference type="SMR" id="Q57SD2"/>
<dbReference type="KEGG" id="sec:SCH_0473"/>
<dbReference type="HOGENOM" id="CLU_045011_12_0_6"/>
<dbReference type="Proteomes" id="UP000000538">
    <property type="component" value="Chromosome"/>
</dbReference>
<dbReference type="GO" id="GO:0005829">
    <property type="term" value="C:cytosol"/>
    <property type="evidence" value="ECO:0007669"/>
    <property type="project" value="TreeGrafter"/>
</dbReference>
<dbReference type="GO" id="GO:0000287">
    <property type="term" value="F:magnesium ion binding"/>
    <property type="evidence" value="ECO:0007669"/>
    <property type="project" value="UniProtKB-UniRule"/>
</dbReference>
<dbReference type="GO" id="GO:0008967">
    <property type="term" value="F:phosphoglycolate phosphatase activity"/>
    <property type="evidence" value="ECO:0007669"/>
    <property type="project" value="TreeGrafter"/>
</dbReference>
<dbReference type="GO" id="GO:0050194">
    <property type="term" value="F:phosphonoacetaldehyde hydrolase activity"/>
    <property type="evidence" value="ECO:0007669"/>
    <property type="project" value="UniProtKB-UniRule"/>
</dbReference>
<dbReference type="GO" id="GO:0006281">
    <property type="term" value="P:DNA repair"/>
    <property type="evidence" value="ECO:0007669"/>
    <property type="project" value="TreeGrafter"/>
</dbReference>
<dbReference type="GO" id="GO:0019700">
    <property type="term" value="P:organic phosphonate catabolic process"/>
    <property type="evidence" value="ECO:0007669"/>
    <property type="project" value="InterPro"/>
</dbReference>
<dbReference type="CDD" id="cd02586">
    <property type="entry name" value="HAD_PHN"/>
    <property type="match status" value="1"/>
</dbReference>
<dbReference type="FunFam" id="1.10.150.240:FF:000006">
    <property type="entry name" value="Phosphonoacetaldehyde hydrolase"/>
    <property type="match status" value="1"/>
</dbReference>
<dbReference type="FunFam" id="3.40.50.1000:FF:000072">
    <property type="entry name" value="Phosphonoacetaldehyde hydrolase"/>
    <property type="match status" value="1"/>
</dbReference>
<dbReference type="Gene3D" id="3.40.50.1000">
    <property type="entry name" value="HAD superfamily/HAD-like"/>
    <property type="match status" value="1"/>
</dbReference>
<dbReference type="Gene3D" id="1.10.150.240">
    <property type="entry name" value="Putative phosphatase, domain 2"/>
    <property type="match status" value="1"/>
</dbReference>
<dbReference type="HAMAP" id="MF_01375">
    <property type="entry name" value="PhnX"/>
    <property type="match status" value="1"/>
</dbReference>
<dbReference type="InterPro" id="IPR050155">
    <property type="entry name" value="HAD-like_hydrolase_sf"/>
</dbReference>
<dbReference type="InterPro" id="IPR036412">
    <property type="entry name" value="HAD-like_sf"/>
</dbReference>
<dbReference type="InterPro" id="IPR006439">
    <property type="entry name" value="HAD-SF_hydro_IA"/>
</dbReference>
<dbReference type="InterPro" id="IPR023214">
    <property type="entry name" value="HAD_sf"/>
</dbReference>
<dbReference type="InterPro" id="IPR023198">
    <property type="entry name" value="PGP-like_dom2"/>
</dbReference>
<dbReference type="InterPro" id="IPR006323">
    <property type="entry name" value="Phosphonoacetald_hydro"/>
</dbReference>
<dbReference type="NCBIfam" id="TIGR01509">
    <property type="entry name" value="HAD-SF-IA-v3"/>
    <property type="match status" value="1"/>
</dbReference>
<dbReference type="NCBIfam" id="TIGR01422">
    <property type="entry name" value="phosphonatase"/>
    <property type="match status" value="1"/>
</dbReference>
<dbReference type="PANTHER" id="PTHR43434">
    <property type="entry name" value="PHOSPHOGLYCOLATE PHOSPHATASE"/>
    <property type="match status" value="1"/>
</dbReference>
<dbReference type="PANTHER" id="PTHR43434:SF19">
    <property type="entry name" value="PHOSPHONOACETALDEHYDE HYDROLASE"/>
    <property type="match status" value="1"/>
</dbReference>
<dbReference type="Pfam" id="PF00702">
    <property type="entry name" value="Hydrolase"/>
    <property type="match status" value="1"/>
</dbReference>
<dbReference type="SFLD" id="SFLDS00003">
    <property type="entry name" value="Haloacid_Dehalogenase"/>
    <property type="match status" value="1"/>
</dbReference>
<dbReference type="SFLD" id="SFLDF00038">
    <property type="entry name" value="phosphonoacetaldehyde_hydrolas"/>
    <property type="match status" value="1"/>
</dbReference>
<dbReference type="SUPFAM" id="SSF56784">
    <property type="entry name" value="HAD-like"/>
    <property type="match status" value="1"/>
</dbReference>
<organism>
    <name type="scientific">Salmonella choleraesuis (strain SC-B67)</name>
    <dbReference type="NCBI Taxonomy" id="321314"/>
    <lineage>
        <taxon>Bacteria</taxon>
        <taxon>Pseudomonadati</taxon>
        <taxon>Pseudomonadota</taxon>
        <taxon>Gammaproteobacteria</taxon>
        <taxon>Enterobacterales</taxon>
        <taxon>Enterobacteriaceae</taxon>
        <taxon>Salmonella</taxon>
    </lineage>
</organism>
<accession>Q57SD2</accession>
<protein>
    <recommendedName>
        <fullName evidence="1">Phosphonoacetaldehyde hydrolase</fullName>
        <shortName evidence="1">Phosphonatase</shortName>
        <ecNumber evidence="1">3.11.1.1</ecNumber>
    </recommendedName>
    <alternativeName>
        <fullName evidence="1">Phosphonoacetaldehyde phosphonohydrolase</fullName>
    </alternativeName>
</protein>
<sequence>MMNRIHAVILDWAGTTVDFGSFAPTQIFVEAFRQAFDVEITLAEARVPMGLGKWQHIEALGKLPAVDARWQAKFSRSMSAADIDAIYAAFMPLQIAKVVDFSSPIAGVIDTIAALRAEGIKIGSCSGYPRAVMERLVPAAAGHGYCPDHWVATDDLAAGGRPGPWMALQNVIALGIDAVAHCVKVDDAAPGISEGLNAGMWTVGLAVSGNEFGATWDAYQTMSKEDVAVRREHAASKLYAAGAHYVVDSLADLPEVIAHINARLAQGERL</sequence>
<feature type="chain" id="PRO_0000284598" description="Phosphonoacetaldehyde hydrolase">
    <location>
        <begin position="1"/>
        <end position="270"/>
    </location>
</feature>
<feature type="active site" description="Nucleophile" evidence="1">
    <location>
        <position position="11"/>
    </location>
</feature>
<feature type="active site" description="Schiff-base intermediate with substrate" evidence="1">
    <location>
        <position position="53"/>
    </location>
</feature>
<feature type="binding site" evidence="1">
    <location>
        <position position="11"/>
    </location>
    <ligand>
        <name>Mg(2+)</name>
        <dbReference type="ChEBI" id="CHEBI:18420"/>
    </ligand>
</feature>
<feature type="binding site" evidence="1">
    <location>
        <position position="13"/>
    </location>
    <ligand>
        <name>Mg(2+)</name>
        <dbReference type="ChEBI" id="CHEBI:18420"/>
    </ligand>
</feature>
<feature type="binding site" evidence="1">
    <location>
        <position position="187"/>
    </location>
    <ligand>
        <name>Mg(2+)</name>
        <dbReference type="ChEBI" id="CHEBI:18420"/>
    </ligand>
</feature>